<evidence type="ECO:0000255" key="1">
    <source>
        <dbReference type="HAMAP-Rule" id="MF_00050"/>
    </source>
</evidence>
<organism>
    <name type="scientific">Fervidobacterium nodosum (strain ATCC 35602 / DSM 5306 / Rt17-B1)</name>
    <dbReference type="NCBI Taxonomy" id="381764"/>
    <lineage>
        <taxon>Bacteria</taxon>
        <taxon>Thermotogati</taxon>
        <taxon>Thermotogota</taxon>
        <taxon>Thermotogae</taxon>
        <taxon>Thermotogales</taxon>
        <taxon>Fervidobacteriaceae</taxon>
        <taxon>Fervidobacterium</taxon>
    </lineage>
</organism>
<sequence length="197" mass="22253">MEISAQMVKELRERTGAGMMDCKNALAEANGDFEKAIEILRKKGLAKAAKKAGRETKEGLIISYVHHNGKIGVLLELNCETDFVARTDDFKELGNKIAMHIAAMSPRWVTREEVPADVIEKEKEIYREQLKDSGKPAQVIEKIIEGKLESFYQDNCLLEQKFALDQNVTIKDMIQQAIAKIGENIQVSRFVRMQIGE</sequence>
<protein>
    <recommendedName>
        <fullName evidence="1">Elongation factor Ts</fullName>
        <shortName evidence="1">EF-Ts</shortName>
    </recommendedName>
</protein>
<proteinExistence type="inferred from homology"/>
<feature type="chain" id="PRO_1000071122" description="Elongation factor Ts">
    <location>
        <begin position="1"/>
        <end position="197"/>
    </location>
</feature>
<feature type="region of interest" description="Involved in Mg(2+) ion dislocation from EF-Tu" evidence="1">
    <location>
        <begin position="81"/>
        <end position="84"/>
    </location>
</feature>
<reference key="1">
    <citation type="submission" date="2007-07" db="EMBL/GenBank/DDBJ databases">
        <title>Complete sequence of Fervidobacterium nodosum Rt17-B1.</title>
        <authorList>
            <consortium name="US DOE Joint Genome Institute"/>
            <person name="Copeland A."/>
            <person name="Lucas S."/>
            <person name="Lapidus A."/>
            <person name="Barry K."/>
            <person name="Glavina del Rio T."/>
            <person name="Dalin E."/>
            <person name="Tice H."/>
            <person name="Pitluck S."/>
            <person name="Saunders E."/>
            <person name="Brettin T."/>
            <person name="Bruce D."/>
            <person name="Detter J.C."/>
            <person name="Han C."/>
            <person name="Schmutz J."/>
            <person name="Larimer F."/>
            <person name="Land M."/>
            <person name="Hauser L."/>
            <person name="Kyrpides N."/>
            <person name="Mikhailova N."/>
            <person name="Nelson K."/>
            <person name="Gogarten J.P."/>
            <person name="Noll K."/>
            <person name="Richardson P."/>
        </authorList>
    </citation>
    <scope>NUCLEOTIDE SEQUENCE [LARGE SCALE GENOMIC DNA]</scope>
    <source>
        <strain>ATCC 35602 / DSM 5306 / Rt17-B1</strain>
    </source>
</reference>
<accession>A7HJI3</accession>
<name>EFTS_FERNB</name>
<gene>
    <name evidence="1" type="primary">tsf</name>
    <name type="ordered locus">Fnod_0199</name>
</gene>
<comment type="function">
    <text evidence="1">Associates with the EF-Tu.GDP complex and induces the exchange of GDP to GTP. It remains bound to the aminoacyl-tRNA.EF-Tu.GTP complex up to the GTP hydrolysis stage on the ribosome.</text>
</comment>
<comment type="subcellular location">
    <subcellularLocation>
        <location evidence="1">Cytoplasm</location>
    </subcellularLocation>
</comment>
<comment type="similarity">
    <text evidence="1">Belongs to the EF-Ts family.</text>
</comment>
<keyword id="KW-0963">Cytoplasm</keyword>
<keyword id="KW-0251">Elongation factor</keyword>
<keyword id="KW-0648">Protein biosynthesis</keyword>
<keyword id="KW-1185">Reference proteome</keyword>
<dbReference type="EMBL" id="CP000771">
    <property type="protein sequence ID" value="ABS60066.1"/>
    <property type="molecule type" value="Genomic_DNA"/>
</dbReference>
<dbReference type="RefSeq" id="WP_011993389.1">
    <property type="nucleotide sequence ID" value="NC_009718.1"/>
</dbReference>
<dbReference type="SMR" id="A7HJI3"/>
<dbReference type="STRING" id="381764.Fnod_0199"/>
<dbReference type="KEGG" id="fno:Fnod_0199"/>
<dbReference type="eggNOG" id="COG0264">
    <property type="taxonomic scope" value="Bacteria"/>
</dbReference>
<dbReference type="HOGENOM" id="CLU_047155_1_1_0"/>
<dbReference type="OrthoDB" id="9808348at2"/>
<dbReference type="Proteomes" id="UP000002415">
    <property type="component" value="Chromosome"/>
</dbReference>
<dbReference type="GO" id="GO:0005737">
    <property type="term" value="C:cytoplasm"/>
    <property type="evidence" value="ECO:0007669"/>
    <property type="project" value="UniProtKB-SubCell"/>
</dbReference>
<dbReference type="GO" id="GO:0003746">
    <property type="term" value="F:translation elongation factor activity"/>
    <property type="evidence" value="ECO:0007669"/>
    <property type="project" value="UniProtKB-UniRule"/>
</dbReference>
<dbReference type="CDD" id="cd14275">
    <property type="entry name" value="UBA_EF-Ts"/>
    <property type="match status" value="1"/>
</dbReference>
<dbReference type="FunFam" id="1.10.286.20:FF:000001">
    <property type="entry name" value="Elongation factor Ts"/>
    <property type="match status" value="1"/>
</dbReference>
<dbReference type="FunFam" id="1.10.8.10:FF:000001">
    <property type="entry name" value="Elongation factor Ts"/>
    <property type="match status" value="1"/>
</dbReference>
<dbReference type="Gene3D" id="1.10.286.20">
    <property type="match status" value="1"/>
</dbReference>
<dbReference type="Gene3D" id="1.10.8.10">
    <property type="entry name" value="DNA helicase RuvA subunit, C-terminal domain"/>
    <property type="match status" value="1"/>
</dbReference>
<dbReference type="Gene3D" id="3.30.479.20">
    <property type="entry name" value="Elongation factor Ts, dimerisation domain"/>
    <property type="match status" value="1"/>
</dbReference>
<dbReference type="HAMAP" id="MF_00050">
    <property type="entry name" value="EF_Ts"/>
    <property type="match status" value="1"/>
</dbReference>
<dbReference type="InterPro" id="IPR036402">
    <property type="entry name" value="EF-Ts_dimer_sf"/>
</dbReference>
<dbReference type="InterPro" id="IPR001816">
    <property type="entry name" value="Transl_elong_EFTs/EF1B"/>
</dbReference>
<dbReference type="InterPro" id="IPR014039">
    <property type="entry name" value="Transl_elong_EFTs/EF1B_dimer"/>
</dbReference>
<dbReference type="InterPro" id="IPR018101">
    <property type="entry name" value="Transl_elong_Ts_CS"/>
</dbReference>
<dbReference type="InterPro" id="IPR009060">
    <property type="entry name" value="UBA-like_sf"/>
</dbReference>
<dbReference type="NCBIfam" id="TIGR00116">
    <property type="entry name" value="tsf"/>
    <property type="match status" value="1"/>
</dbReference>
<dbReference type="PANTHER" id="PTHR11741">
    <property type="entry name" value="ELONGATION FACTOR TS"/>
    <property type="match status" value="1"/>
</dbReference>
<dbReference type="PANTHER" id="PTHR11741:SF0">
    <property type="entry name" value="ELONGATION FACTOR TS, MITOCHONDRIAL"/>
    <property type="match status" value="1"/>
</dbReference>
<dbReference type="Pfam" id="PF00889">
    <property type="entry name" value="EF_TS"/>
    <property type="match status" value="1"/>
</dbReference>
<dbReference type="SUPFAM" id="SSF54713">
    <property type="entry name" value="Elongation factor Ts (EF-Ts), dimerisation domain"/>
    <property type="match status" value="1"/>
</dbReference>
<dbReference type="SUPFAM" id="SSF46934">
    <property type="entry name" value="UBA-like"/>
    <property type="match status" value="1"/>
</dbReference>
<dbReference type="PROSITE" id="PS01126">
    <property type="entry name" value="EF_TS_1"/>
    <property type="match status" value="1"/>
</dbReference>
<dbReference type="PROSITE" id="PS01127">
    <property type="entry name" value="EF_TS_2"/>
    <property type="match status" value="1"/>
</dbReference>